<geneLocation type="mitochondrion"/>
<evidence type="ECO:0000256" key="1">
    <source>
        <dbReference type="SAM" id="MobiDB-lite"/>
    </source>
</evidence>
<evidence type="ECO:0000269" key="2">
    <source>
    </source>
</evidence>
<evidence type="ECO:0000269" key="3">
    <source>
    </source>
</evidence>
<evidence type="ECO:0000305" key="4"/>
<reference key="1">
    <citation type="journal article" date="1996" name="Plant Mol. Biol.">
        <title>A ribosomal protein L2 gene is transcribed, spliced, and edited at one site in rice mitochondria.</title>
        <authorList>
            <person name="Kubo N."/>
            <person name="Ozawa K."/>
            <person name="Hino T."/>
            <person name="Kadowaki K."/>
        </authorList>
    </citation>
    <scope>NUCLEOTIDE SEQUENCE [GENOMIC DNA]</scope>
    <scope>RNA EDITING</scope>
    <source>
        <strain>cv. Nipponbare</strain>
        <tissue>Shoot</tissue>
    </source>
</reference>
<reference key="2">
    <citation type="journal article" date="2002" name="Mol. Genet. Genomics">
        <title>The complete sequence of the rice (Oryza sativa L.) mitochondrial genome: frequent DNA sequence acquisition and loss during the evolution of flowering plants.</title>
        <authorList>
            <person name="Notsu Y."/>
            <person name="Masood S."/>
            <person name="Nishikawa T."/>
            <person name="Kubo N."/>
            <person name="Akiduki G."/>
            <person name="Nakazono M."/>
            <person name="Hirai A."/>
            <person name="Kadowaki K."/>
        </authorList>
    </citation>
    <scope>NUCLEOTIDE SEQUENCE [LARGE SCALE GENOMIC DNA]</scope>
    <scope>RNA EDITING</scope>
    <source>
        <strain>cv. Nipponbare</strain>
    </source>
</reference>
<dbReference type="EMBL" id="D78336">
    <property type="protein sequence ID" value="BAA11350.2"/>
    <property type="molecule type" value="Genomic_DNA"/>
</dbReference>
<dbReference type="EMBL" id="DQ167400">
    <property type="protein sequence ID" value="AAZ99354.1"/>
    <property type="status" value="ALT_SEQ"/>
    <property type="molecule type" value="Genomic_DNA"/>
</dbReference>
<dbReference type="EMBL" id="BA000029">
    <property type="protein sequence ID" value="BAC19886.1"/>
    <property type="status" value="ALT_SEQ"/>
    <property type="molecule type" value="Genomic_DNA"/>
</dbReference>
<dbReference type="PIR" id="T03019">
    <property type="entry name" value="T03019"/>
</dbReference>
<dbReference type="RefSeq" id="YP_002000581.1">
    <property type="nucleotide sequence ID" value="NC_011033.1"/>
</dbReference>
<dbReference type="FunCoup" id="P92812">
    <property type="interactions" value="459"/>
</dbReference>
<dbReference type="STRING" id="39947.P92812"/>
<dbReference type="PaxDb" id="39947-P92812"/>
<dbReference type="GeneID" id="6450181"/>
<dbReference type="KEGG" id="dosa:rpl2"/>
<dbReference type="KEGG" id="osa:6450181"/>
<dbReference type="InParanoid" id="P92812"/>
<dbReference type="OrthoDB" id="10267824at2759"/>
<dbReference type="Proteomes" id="UP000059680">
    <property type="component" value="Mitochondrion"/>
</dbReference>
<dbReference type="GO" id="GO:0005762">
    <property type="term" value="C:mitochondrial large ribosomal subunit"/>
    <property type="evidence" value="ECO:0000318"/>
    <property type="project" value="GO_Central"/>
</dbReference>
<dbReference type="GO" id="GO:0005739">
    <property type="term" value="C:mitochondrion"/>
    <property type="evidence" value="ECO:0000250"/>
    <property type="project" value="Gramene"/>
</dbReference>
<dbReference type="GO" id="GO:0003723">
    <property type="term" value="F:RNA binding"/>
    <property type="evidence" value="ECO:0000318"/>
    <property type="project" value="GO_Central"/>
</dbReference>
<dbReference type="GO" id="GO:0003735">
    <property type="term" value="F:structural constituent of ribosome"/>
    <property type="evidence" value="ECO:0000318"/>
    <property type="project" value="GO_Central"/>
</dbReference>
<dbReference type="GO" id="GO:0032543">
    <property type="term" value="P:mitochondrial translation"/>
    <property type="evidence" value="ECO:0000318"/>
    <property type="project" value="GO_Central"/>
</dbReference>
<dbReference type="FunFam" id="2.30.30.30:FF:000001">
    <property type="entry name" value="50S ribosomal protein L2"/>
    <property type="match status" value="1"/>
</dbReference>
<dbReference type="FunFam" id="4.10.950.10:FF:000001">
    <property type="entry name" value="50S ribosomal protein L2"/>
    <property type="match status" value="1"/>
</dbReference>
<dbReference type="FunFam" id="2.40.50.140:FF:000254">
    <property type="entry name" value="Ribosomal protein L2 mitochondrion"/>
    <property type="match status" value="1"/>
</dbReference>
<dbReference type="Gene3D" id="2.30.30.30">
    <property type="match status" value="1"/>
</dbReference>
<dbReference type="Gene3D" id="2.40.50.140">
    <property type="entry name" value="Nucleic acid-binding proteins"/>
    <property type="match status" value="1"/>
</dbReference>
<dbReference type="Gene3D" id="4.10.950.10">
    <property type="entry name" value="Ribosomal protein L2, domain 3"/>
    <property type="match status" value="1"/>
</dbReference>
<dbReference type="InterPro" id="IPR012340">
    <property type="entry name" value="NA-bd_OB-fold"/>
</dbReference>
<dbReference type="InterPro" id="IPR014722">
    <property type="entry name" value="Rib_uL2_dom2"/>
</dbReference>
<dbReference type="InterPro" id="IPR002171">
    <property type="entry name" value="Ribosomal_uL2"/>
</dbReference>
<dbReference type="InterPro" id="IPR022669">
    <property type="entry name" value="Ribosomal_uL2_C"/>
</dbReference>
<dbReference type="InterPro" id="IPR022671">
    <property type="entry name" value="Ribosomal_uL2_CS"/>
</dbReference>
<dbReference type="InterPro" id="IPR014726">
    <property type="entry name" value="Ribosomal_uL2_dom3"/>
</dbReference>
<dbReference type="InterPro" id="IPR022666">
    <property type="entry name" value="Ribosomal_uL2_RNA-bd_dom"/>
</dbReference>
<dbReference type="InterPro" id="IPR008991">
    <property type="entry name" value="Translation_prot_SH3-like_sf"/>
</dbReference>
<dbReference type="PANTHER" id="PTHR13691:SF44">
    <property type="entry name" value="LARGE RIBOSOMAL SUBUNIT PROTEIN UL2MZ-RELATED"/>
    <property type="match status" value="1"/>
</dbReference>
<dbReference type="PANTHER" id="PTHR13691">
    <property type="entry name" value="RIBOSOMAL PROTEIN L2"/>
    <property type="match status" value="1"/>
</dbReference>
<dbReference type="Pfam" id="PF00181">
    <property type="entry name" value="Ribosomal_L2"/>
    <property type="match status" value="1"/>
</dbReference>
<dbReference type="Pfam" id="PF03947">
    <property type="entry name" value="Ribosomal_L2_C"/>
    <property type="match status" value="1"/>
</dbReference>
<dbReference type="SMART" id="SM01383">
    <property type="entry name" value="Ribosomal_L2"/>
    <property type="match status" value="1"/>
</dbReference>
<dbReference type="SMART" id="SM01382">
    <property type="entry name" value="Ribosomal_L2_C"/>
    <property type="match status" value="1"/>
</dbReference>
<dbReference type="SUPFAM" id="SSF50249">
    <property type="entry name" value="Nucleic acid-binding proteins"/>
    <property type="match status" value="1"/>
</dbReference>
<dbReference type="SUPFAM" id="SSF50104">
    <property type="entry name" value="Translation proteins SH3-like domain"/>
    <property type="match status" value="1"/>
</dbReference>
<dbReference type="PROSITE" id="PS00467">
    <property type="entry name" value="RIBOSOMAL_L2"/>
    <property type="match status" value="1"/>
</dbReference>
<keyword id="KW-0496">Mitochondrion</keyword>
<keyword id="KW-1185">Reference proteome</keyword>
<keyword id="KW-0687">Ribonucleoprotein</keyword>
<keyword id="KW-0689">Ribosomal protein</keyword>
<keyword id="KW-0691">RNA editing</keyword>
<proteinExistence type="evidence at transcript level"/>
<sequence>MRQSIKGRALRHFTLSTGKSAGRNSSGRITVFHRGGGSKRLQRKIDLKRSTSSIGIVERIEYDPNRSSRIALVRWIEGVLPGRQRKFKTIEEFALPRKILESTTATIFCLFSFSSLSSPLAQGETASLSFGSSLGFPRIAVAGAKPAFFAERMREKKIGKKTFSLCEIRKWRTHCVLWAHRIKRKAALSWQSLRQQKTLELVGAAEHNESKLKADQGSLLPRQVLAYALCSGRPSYLHASRSFYKALLPVEASRFGSLPAKPPIGEGPKDGAYKVDRAPVTYILASHQLEAGNMVINCDCSKPSKSGFLRPAQNAHTYLRFQELGRTVNKGRVEGGSQLAASWPRPPAYRHEILDLNSKVGNSIPLADIRMGTWVHDIECHPGQGAKLARAAGTYAKIIKEPASQCLVRLPSGVEKLIDSRCRATIGIVSNPNHGARKLRKAGQSRWSGRRPIVRGVAMNPVDHPHGGGEGRTKGGRPSVSPWGKPTKAGFRAGVGVGKRRI</sequence>
<organism>
    <name type="scientific">Oryza sativa subsp. japonica</name>
    <name type="common">Rice</name>
    <dbReference type="NCBI Taxonomy" id="39947"/>
    <lineage>
        <taxon>Eukaryota</taxon>
        <taxon>Viridiplantae</taxon>
        <taxon>Streptophyta</taxon>
        <taxon>Embryophyta</taxon>
        <taxon>Tracheophyta</taxon>
        <taxon>Spermatophyta</taxon>
        <taxon>Magnoliopsida</taxon>
        <taxon>Liliopsida</taxon>
        <taxon>Poales</taxon>
        <taxon>Poaceae</taxon>
        <taxon>BOP clade</taxon>
        <taxon>Oryzoideae</taxon>
        <taxon>Oryzeae</taxon>
        <taxon>Oryzinae</taxon>
        <taxon>Oryza</taxon>
        <taxon>Oryza sativa</taxon>
    </lineage>
</organism>
<protein>
    <recommendedName>
        <fullName evidence="4">Large ribosomal subunit protein uL2m</fullName>
    </recommendedName>
    <alternativeName>
        <fullName>60S ribosomal protein L2, mitochondrial</fullName>
    </alternativeName>
</protein>
<gene>
    <name type="primary">RPL2</name>
</gene>
<feature type="chain" id="PRO_0000129738" description="Large ribosomal subunit protein uL2m">
    <location>
        <begin position="1"/>
        <end position="502"/>
    </location>
</feature>
<feature type="region of interest" description="Disordered" evidence="1">
    <location>
        <begin position="458"/>
        <end position="502"/>
    </location>
</feature>
<feature type="compositionally biased region" description="Basic and acidic residues" evidence="1">
    <location>
        <begin position="463"/>
        <end position="473"/>
    </location>
</feature>
<feature type="compositionally biased region" description="Gly residues" evidence="1">
    <location>
        <begin position="493"/>
        <end position="502"/>
    </location>
</feature>
<accession>P92812</accession>
<accession>Q8HCN7</accession>
<name>RM02_ORYSJ</name>
<comment type="subcellular location">
    <subcellularLocation>
        <location>Mitochondrion</location>
    </subcellularLocation>
</comment>
<comment type="RNA editing">
    <location>
        <position position="404" evidence="2 3"/>
    </location>
</comment>
<comment type="similarity">
    <text evidence="4">Belongs to the universal ribosomal protein uL2 family.</text>
</comment>